<evidence type="ECO:0000250" key="1">
    <source>
        <dbReference type="UniProtKB" id="Q03305"/>
    </source>
</evidence>
<evidence type="ECO:0000255" key="2">
    <source>
        <dbReference type="PROSITE-ProRule" id="PRU00892"/>
    </source>
</evidence>
<evidence type="ECO:0000256" key="3">
    <source>
        <dbReference type="SAM" id="MobiDB-lite"/>
    </source>
</evidence>
<protein>
    <recommendedName>
        <fullName evidence="1">Protein arginine N-methyltransferase 2</fullName>
        <ecNumber evidence="1">2.1.1.-</ecNumber>
    </recommendedName>
    <alternativeName>
        <fullName evidence="1">Protein-arginine N5-methyltransferase</fullName>
    </alternativeName>
    <alternativeName>
        <fullName evidence="1">Type IV protein arginine N-methyltransferase</fullName>
        <shortName evidence="1">Type IV PRMT</shortName>
    </alternativeName>
</protein>
<accession>Q4X1R1</accession>
<sequence length="424" mass="46912">MADPLADFGSNVDLTVQEILLAASQHDVPKLRRLIRSNDKDGNPANVKDPETGFSPLHAAIAACEPDEAQTETNGVNGETSSASTEQKSLVQSAAETVKYLLQEGAIWNDLDLNDETPGCIARRLGLTELYEMIVDAGVRAELLLNRLDGYEPLSDDEDDQETGQGEDAANEPAAEEDQDGAPELVETTAADASAAEASTEGPGPDVTSSRYLDSNLTFTNDRLLDQDQNGVMMAWETEIMSRSAKKLLPTTGLRVMNIGHGMGIVDGFIQEQSPAAHHIVEAHPDVVAEMKRKGWHEKPGVVIHEGRWQDILPALVAQGETFDAIYYDTFAESYADFREFFSEQVIGLLEQDGKWGFFNGMGADRQISYDVYQKVVEMDLFEAGFDVEWEEIKVPKLEGEWTGVRRPYWVVDNYRLPLCKFMD</sequence>
<keyword id="KW-0963">Cytoplasm</keyword>
<keyword id="KW-0489">Methyltransferase</keyword>
<keyword id="KW-0539">Nucleus</keyword>
<keyword id="KW-1185">Reference proteome</keyword>
<keyword id="KW-0949">S-adenosyl-L-methionine</keyword>
<keyword id="KW-0808">Transferase</keyword>
<dbReference type="EC" id="2.1.1.-" evidence="1"/>
<dbReference type="EMBL" id="AAHF01000001">
    <property type="protein sequence ID" value="EAL93204.1"/>
    <property type="molecule type" value="Genomic_DNA"/>
</dbReference>
<dbReference type="RefSeq" id="XP_755242.1">
    <property type="nucleotide sequence ID" value="XM_750149.1"/>
</dbReference>
<dbReference type="SMR" id="Q4X1R1"/>
<dbReference type="FunCoup" id="Q4X1R1">
    <property type="interactions" value="386"/>
</dbReference>
<dbReference type="STRING" id="330879.Q4X1R1"/>
<dbReference type="EnsemblFungi" id="EAL93204">
    <property type="protein sequence ID" value="EAL93204"/>
    <property type="gene ID" value="AFUA_2G09080"/>
</dbReference>
<dbReference type="GeneID" id="3512757"/>
<dbReference type="KEGG" id="afm:AFUA_2G09080"/>
<dbReference type="VEuPathDB" id="FungiDB:Afu2g09080"/>
<dbReference type="eggNOG" id="KOG1709">
    <property type="taxonomic scope" value="Eukaryota"/>
</dbReference>
<dbReference type="HOGENOM" id="CLU_033831_0_0_1"/>
<dbReference type="InParanoid" id="Q4X1R1"/>
<dbReference type="OMA" id="YWVVDNY"/>
<dbReference type="OrthoDB" id="19014at2759"/>
<dbReference type="Proteomes" id="UP000002530">
    <property type="component" value="Chromosome 2"/>
</dbReference>
<dbReference type="GO" id="GO:0005737">
    <property type="term" value="C:cytoplasm"/>
    <property type="evidence" value="ECO:0000318"/>
    <property type="project" value="GO_Central"/>
</dbReference>
<dbReference type="GO" id="GO:0005634">
    <property type="term" value="C:nucleus"/>
    <property type="evidence" value="ECO:0000318"/>
    <property type="project" value="GO_Central"/>
</dbReference>
<dbReference type="GO" id="GO:0019702">
    <property type="term" value="F:protein arginine N5-methyltransferase activity"/>
    <property type="evidence" value="ECO:0000318"/>
    <property type="project" value="GO_Central"/>
</dbReference>
<dbReference type="GO" id="GO:0032259">
    <property type="term" value="P:methylation"/>
    <property type="evidence" value="ECO:0007669"/>
    <property type="project" value="UniProtKB-KW"/>
</dbReference>
<dbReference type="FunFam" id="1.25.40.20:FF:000394">
    <property type="entry name" value="Arginine N-methyltransferase 2"/>
    <property type="match status" value="1"/>
</dbReference>
<dbReference type="FunFam" id="3.40.50.150:FF:000135">
    <property type="entry name" value="Arginine N-methyltransferase 2"/>
    <property type="match status" value="1"/>
</dbReference>
<dbReference type="Gene3D" id="1.25.40.20">
    <property type="entry name" value="Ankyrin repeat-containing domain"/>
    <property type="match status" value="1"/>
</dbReference>
<dbReference type="Gene3D" id="3.40.50.150">
    <property type="entry name" value="Vaccinia Virus protein VP39"/>
    <property type="match status" value="1"/>
</dbReference>
<dbReference type="InterPro" id="IPR036770">
    <property type="entry name" value="Ankyrin_rpt-contain_sf"/>
</dbReference>
<dbReference type="InterPro" id="IPR017408">
    <property type="entry name" value="Arginine_N-MeTrfase_2"/>
</dbReference>
<dbReference type="InterPro" id="IPR051038">
    <property type="entry name" value="RMT2/GAMT_Mtase"/>
</dbReference>
<dbReference type="InterPro" id="IPR026480">
    <property type="entry name" value="RMT2_dom"/>
</dbReference>
<dbReference type="InterPro" id="IPR029063">
    <property type="entry name" value="SAM-dependent_MTases_sf"/>
</dbReference>
<dbReference type="PANTHER" id="PTHR32379">
    <property type="entry name" value="GUANIDINOACETATE N-METHYLTRANSFERASE"/>
    <property type="match status" value="1"/>
</dbReference>
<dbReference type="PANTHER" id="PTHR32379:SF1">
    <property type="entry name" value="GUANIDINOACETATE N-METHYLTRANSFERASE"/>
    <property type="match status" value="1"/>
</dbReference>
<dbReference type="PIRSF" id="PIRSF038148">
    <property type="entry name" value="Arginine_N-mtfrase-2"/>
    <property type="match status" value="1"/>
</dbReference>
<dbReference type="SUPFAM" id="SSF48403">
    <property type="entry name" value="Ankyrin repeat"/>
    <property type="match status" value="1"/>
</dbReference>
<dbReference type="SUPFAM" id="SSF53335">
    <property type="entry name" value="S-adenosyl-L-methionine-dependent methyltransferases"/>
    <property type="match status" value="1"/>
</dbReference>
<dbReference type="PROSITE" id="PS51559">
    <property type="entry name" value="SAM_RMT2"/>
    <property type="match status" value="1"/>
</dbReference>
<gene>
    <name evidence="1" type="primary">rmt2</name>
    <name type="ORF">AFUA_2G09080</name>
</gene>
<name>RMT2_ASPFU</name>
<comment type="function">
    <text evidence="1">S-adenosyl-L-methionine-dependent protein-arginine N-methyltransferase that methylates the delta-nitrogen atom of arginine residues to form N5-methylarginine (type IV) in target proteins. Monomethylates ribosomal protein L12.</text>
</comment>
<comment type="subunit">
    <text evidence="1">Monomer.</text>
</comment>
<comment type="subcellular location">
    <subcellularLocation>
        <location evidence="1">Cytoplasm</location>
    </subcellularLocation>
    <subcellularLocation>
        <location evidence="1">Nucleus</location>
    </subcellularLocation>
</comment>
<comment type="similarity">
    <text evidence="2">Belongs to the class I-like SAM-binding methyltransferase superfamily. RMT2 methyltransferase family.</text>
</comment>
<organism>
    <name type="scientific">Aspergillus fumigatus (strain ATCC MYA-4609 / CBS 101355 / FGSC A1100 / Af293)</name>
    <name type="common">Neosartorya fumigata</name>
    <dbReference type="NCBI Taxonomy" id="330879"/>
    <lineage>
        <taxon>Eukaryota</taxon>
        <taxon>Fungi</taxon>
        <taxon>Dikarya</taxon>
        <taxon>Ascomycota</taxon>
        <taxon>Pezizomycotina</taxon>
        <taxon>Eurotiomycetes</taxon>
        <taxon>Eurotiomycetidae</taxon>
        <taxon>Eurotiales</taxon>
        <taxon>Aspergillaceae</taxon>
        <taxon>Aspergillus</taxon>
        <taxon>Aspergillus subgen. Fumigati</taxon>
    </lineage>
</organism>
<reference key="1">
    <citation type="journal article" date="2005" name="Nature">
        <title>Genomic sequence of the pathogenic and allergenic filamentous fungus Aspergillus fumigatus.</title>
        <authorList>
            <person name="Nierman W.C."/>
            <person name="Pain A."/>
            <person name="Anderson M.J."/>
            <person name="Wortman J.R."/>
            <person name="Kim H.S."/>
            <person name="Arroyo J."/>
            <person name="Berriman M."/>
            <person name="Abe K."/>
            <person name="Archer D.B."/>
            <person name="Bermejo C."/>
            <person name="Bennett J.W."/>
            <person name="Bowyer P."/>
            <person name="Chen D."/>
            <person name="Collins M."/>
            <person name="Coulsen R."/>
            <person name="Davies R."/>
            <person name="Dyer P.S."/>
            <person name="Farman M.L."/>
            <person name="Fedorova N."/>
            <person name="Fedorova N.D."/>
            <person name="Feldblyum T.V."/>
            <person name="Fischer R."/>
            <person name="Fosker N."/>
            <person name="Fraser A."/>
            <person name="Garcia J.L."/>
            <person name="Garcia M.J."/>
            <person name="Goble A."/>
            <person name="Goldman G.H."/>
            <person name="Gomi K."/>
            <person name="Griffith-Jones S."/>
            <person name="Gwilliam R."/>
            <person name="Haas B.J."/>
            <person name="Haas H."/>
            <person name="Harris D.E."/>
            <person name="Horiuchi H."/>
            <person name="Huang J."/>
            <person name="Humphray S."/>
            <person name="Jimenez J."/>
            <person name="Keller N."/>
            <person name="Khouri H."/>
            <person name="Kitamoto K."/>
            <person name="Kobayashi T."/>
            <person name="Konzack S."/>
            <person name="Kulkarni R."/>
            <person name="Kumagai T."/>
            <person name="Lafton A."/>
            <person name="Latge J.-P."/>
            <person name="Li W."/>
            <person name="Lord A."/>
            <person name="Lu C."/>
            <person name="Majoros W.H."/>
            <person name="May G.S."/>
            <person name="Miller B.L."/>
            <person name="Mohamoud Y."/>
            <person name="Molina M."/>
            <person name="Monod M."/>
            <person name="Mouyna I."/>
            <person name="Mulligan S."/>
            <person name="Murphy L.D."/>
            <person name="O'Neil S."/>
            <person name="Paulsen I."/>
            <person name="Penalva M.A."/>
            <person name="Pertea M."/>
            <person name="Price C."/>
            <person name="Pritchard B.L."/>
            <person name="Quail M.A."/>
            <person name="Rabbinowitsch E."/>
            <person name="Rawlins N."/>
            <person name="Rajandream M.A."/>
            <person name="Reichard U."/>
            <person name="Renauld H."/>
            <person name="Robson G.D."/>
            <person name="Rodriguez de Cordoba S."/>
            <person name="Rodriguez-Pena J.M."/>
            <person name="Ronning C.M."/>
            <person name="Rutter S."/>
            <person name="Salzberg S.L."/>
            <person name="Sanchez M."/>
            <person name="Sanchez-Ferrero J.C."/>
            <person name="Saunders D."/>
            <person name="Seeger K."/>
            <person name="Squares R."/>
            <person name="Squares S."/>
            <person name="Takeuchi M."/>
            <person name="Tekaia F."/>
            <person name="Turner G."/>
            <person name="Vazquez de Aldana C.R."/>
            <person name="Weidman J."/>
            <person name="White O."/>
            <person name="Woodward J.R."/>
            <person name="Yu J.-H."/>
            <person name="Fraser C.M."/>
            <person name="Galagan J.E."/>
            <person name="Asai K."/>
            <person name="Machida M."/>
            <person name="Hall N."/>
            <person name="Barrell B.G."/>
            <person name="Denning D.W."/>
        </authorList>
    </citation>
    <scope>NUCLEOTIDE SEQUENCE [LARGE SCALE GENOMIC DNA]</scope>
    <source>
        <strain>ATCC MYA-4609 / CBS 101355 / FGSC A1100 / Af293</strain>
    </source>
</reference>
<feature type="chain" id="PRO_0000228970" description="Protein arginine N-methyltransferase 2">
    <location>
        <begin position="1"/>
        <end position="424"/>
    </location>
</feature>
<feature type="domain" description="RMT2" evidence="2">
    <location>
        <begin position="205"/>
        <end position="424"/>
    </location>
</feature>
<feature type="region of interest" description="Disordered" evidence="3">
    <location>
        <begin position="67"/>
        <end position="89"/>
    </location>
</feature>
<feature type="region of interest" description="Disordered" evidence="3">
    <location>
        <begin position="151"/>
        <end position="212"/>
    </location>
</feature>
<feature type="compositionally biased region" description="Polar residues" evidence="3">
    <location>
        <begin position="71"/>
        <end position="89"/>
    </location>
</feature>
<feature type="compositionally biased region" description="Low complexity" evidence="3">
    <location>
        <begin position="163"/>
        <end position="173"/>
    </location>
</feature>
<feature type="compositionally biased region" description="Low complexity" evidence="3">
    <location>
        <begin position="187"/>
        <end position="201"/>
    </location>
</feature>
<feature type="binding site" evidence="2">
    <location>
        <position position="212"/>
    </location>
    <ligand>
        <name>S-adenosyl-L-methionine</name>
        <dbReference type="ChEBI" id="CHEBI:59789"/>
    </ligand>
</feature>
<feature type="binding site" evidence="2">
    <location>
        <position position="241"/>
    </location>
    <ligand>
        <name>S-adenosyl-L-methionine</name>
        <dbReference type="ChEBI" id="CHEBI:59789"/>
    </ligand>
</feature>
<feature type="binding site" evidence="2">
    <location>
        <begin position="261"/>
        <end position="266"/>
    </location>
    <ligand>
        <name>S-adenosyl-L-methionine</name>
        <dbReference type="ChEBI" id="CHEBI:59789"/>
    </ligand>
</feature>
<feature type="binding site" evidence="2">
    <location>
        <begin position="282"/>
        <end position="284"/>
    </location>
    <ligand>
        <name>S-adenosyl-L-methionine</name>
        <dbReference type="ChEBI" id="CHEBI:59789"/>
    </ligand>
</feature>
<feature type="binding site" evidence="2">
    <location>
        <begin position="309"/>
        <end position="310"/>
    </location>
    <ligand>
        <name>S-adenosyl-L-methionine</name>
        <dbReference type="ChEBI" id="CHEBI:59789"/>
    </ligand>
</feature>
<feature type="binding site" evidence="2">
    <location>
        <position position="329"/>
    </location>
    <ligand>
        <name>S-adenosyl-L-methionine</name>
        <dbReference type="ChEBI" id="CHEBI:59789"/>
    </ligand>
</feature>
<proteinExistence type="inferred from homology"/>